<feature type="chain" id="PRO_0000242321" description="Phosphomethylpyrimidine synthase">
    <location>
        <begin position="1"/>
        <end position="625"/>
    </location>
</feature>
<feature type="binding site" evidence="1">
    <location>
        <position position="230"/>
    </location>
    <ligand>
        <name>substrate</name>
    </ligand>
</feature>
<feature type="binding site" evidence="1">
    <location>
        <position position="259"/>
    </location>
    <ligand>
        <name>substrate</name>
    </ligand>
</feature>
<feature type="binding site" evidence="1">
    <location>
        <position position="288"/>
    </location>
    <ligand>
        <name>substrate</name>
    </ligand>
</feature>
<feature type="binding site" evidence="1">
    <location>
        <position position="324"/>
    </location>
    <ligand>
        <name>substrate</name>
    </ligand>
</feature>
<feature type="binding site" evidence="1">
    <location>
        <begin position="344"/>
        <end position="346"/>
    </location>
    <ligand>
        <name>substrate</name>
    </ligand>
</feature>
<feature type="binding site" evidence="1">
    <location>
        <begin position="385"/>
        <end position="388"/>
    </location>
    <ligand>
        <name>substrate</name>
    </ligand>
</feature>
<feature type="binding site" evidence="1">
    <location>
        <position position="424"/>
    </location>
    <ligand>
        <name>substrate</name>
    </ligand>
</feature>
<feature type="binding site" evidence="1">
    <location>
        <position position="428"/>
    </location>
    <ligand>
        <name>Zn(2+)</name>
        <dbReference type="ChEBI" id="CHEBI:29105"/>
    </ligand>
</feature>
<feature type="binding site" evidence="1">
    <location>
        <position position="451"/>
    </location>
    <ligand>
        <name>substrate</name>
    </ligand>
</feature>
<feature type="binding site" evidence="1">
    <location>
        <position position="492"/>
    </location>
    <ligand>
        <name>Zn(2+)</name>
        <dbReference type="ChEBI" id="CHEBI:29105"/>
    </ligand>
</feature>
<feature type="binding site" evidence="1">
    <location>
        <position position="572"/>
    </location>
    <ligand>
        <name>[4Fe-4S] cluster</name>
        <dbReference type="ChEBI" id="CHEBI:49883"/>
        <note>4Fe-4S-S-AdoMet</note>
    </ligand>
</feature>
<feature type="binding site" evidence="1">
    <location>
        <position position="575"/>
    </location>
    <ligand>
        <name>[4Fe-4S] cluster</name>
        <dbReference type="ChEBI" id="CHEBI:49883"/>
        <note>4Fe-4S-S-AdoMet</note>
    </ligand>
</feature>
<feature type="binding site" evidence="1">
    <location>
        <position position="580"/>
    </location>
    <ligand>
        <name>[4Fe-4S] cluster</name>
        <dbReference type="ChEBI" id="CHEBI:49883"/>
        <note>4Fe-4S-S-AdoMet</note>
    </ligand>
</feature>
<sequence length="625" mass="69227">MNAAPTVLQQQAQSLSEAVTQPIPGSRKIFVQGSRADLQVPMREIALTRTPTLFGGEENPPLSVYDTSGPYTDPQVAIDLAVGLAPLRAHWIAERGDTVALDGLSSSFGRGREHDARLDAVRFPARRLPRVAREGANVTQMHYARRGIITPEMEYVAIRENQRLEAVTDASLRKQHPGEAFGASIQQRITPEFVREEIARGRAILPNNINHPESEPMIIGRNFLTKINANIGNSAVSSGIAEEVEKLVWSIRWGGDTVMDLSTGKHIHETREWIIRNSPVPIGTVPIYQALEKVDGRAEALTWEIFRDTLIEQAEQGVDYFTIHAGVLLRYVPLTAKRVTGIVSRGGSIMAKWCLAHHKENFLYTHFEDICQIMKAYDVAFSLGDGLRPGCIADANDAAQFGELETLGELTKLAWKHDVQTMIEGPGHVPMQLIKENMDKQLRECGEAPFYTLGPLTTDIAPGYDHITSAIGAAMIGWFGTAMLCYVTPKEHLGLPNRQDVRDGIMAYKIAAHAADLAKGHPGAQVRDNALSKARFEFRWDDQFHLGLDPEKAKEFHDETLPKDAHKLAHFCSMCGPHFCSMKITQDVRDYAAEHGMDDAQALSTGMQEKSAQFLAQGAQVYRPM</sequence>
<organism>
    <name type="scientific">Xanthomonas oryzae pv. oryzae (strain MAFF 311018)</name>
    <dbReference type="NCBI Taxonomy" id="342109"/>
    <lineage>
        <taxon>Bacteria</taxon>
        <taxon>Pseudomonadati</taxon>
        <taxon>Pseudomonadota</taxon>
        <taxon>Gammaproteobacteria</taxon>
        <taxon>Lysobacterales</taxon>
        <taxon>Lysobacteraceae</taxon>
        <taxon>Xanthomonas</taxon>
    </lineage>
</organism>
<protein>
    <recommendedName>
        <fullName evidence="1">Phosphomethylpyrimidine synthase</fullName>
        <ecNumber evidence="1">4.1.99.17</ecNumber>
    </recommendedName>
    <alternativeName>
        <fullName evidence="1">Hydroxymethylpyrimidine phosphate synthase</fullName>
        <shortName evidence="1">HMP-P synthase</shortName>
        <shortName evidence="1">HMP-phosphate synthase</shortName>
        <shortName evidence="1">HMPP synthase</shortName>
    </alternativeName>
    <alternativeName>
        <fullName evidence="1">Thiamine biosynthesis protein ThiC</fullName>
    </alternativeName>
</protein>
<dbReference type="EC" id="4.1.99.17" evidence="1"/>
<dbReference type="EMBL" id="AP008229">
    <property type="protein sequence ID" value="BAE67622.1"/>
    <property type="molecule type" value="Genomic_DNA"/>
</dbReference>
<dbReference type="RefSeq" id="WP_011407693.1">
    <property type="nucleotide sequence ID" value="NC_007705.1"/>
</dbReference>
<dbReference type="SMR" id="Q2P755"/>
<dbReference type="KEGG" id="xom:XOO0867"/>
<dbReference type="HOGENOM" id="CLU_013181_2_1_6"/>
<dbReference type="UniPathway" id="UPA00060"/>
<dbReference type="GO" id="GO:0005829">
    <property type="term" value="C:cytosol"/>
    <property type="evidence" value="ECO:0007669"/>
    <property type="project" value="TreeGrafter"/>
</dbReference>
<dbReference type="GO" id="GO:0051539">
    <property type="term" value="F:4 iron, 4 sulfur cluster binding"/>
    <property type="evidence" value="ECO:0007669"/>
    <property type="project" value="UniProtKB-KW"/>
</dbReference>
<dbReference type="GO" id="GO:0016830">
    <property type="term" value="F:carbon-carbon lyase activity"/>
    <property type="evidence" value="ECO:0007669"/>
    <property type="project" value="InterPro"/>
</dbReference>
<dbReference type="GO" id="GO:0008270">
    <property type="term" value="F:zinc ion binding"/>
    <property type="evidence" value="ECO:0007669"/>
    <property type="project" value="UniProtKB-UniRule"/>
</dbReference>
<dbReference type="GO" id="GO:0009228">
    <property type="term" value="P:thiamine biosynthetic process"/>
    <property type="evidence" value="ECO:0007669"/>
    <property type="project" value="UniProtKB-KW"/>
</dbReference>
<dbReference type="GO" id="GO:0009229">
    <property type="term" value="P:thiamine diphosphate biosynthetic process"/>
    <property type="evidence" value="ECO:0007669"/>
    <property type="project" value="UniProtKB-UniRule"/>
</dbReference>
<dbReference type="FunFam" id="3.20.20.540:FF:000001">
    <property type="entry name" value="Phosphomethylpyrimidine synthase"/>
    <property type="match status" value="1"/>
</dbReference>
<dbReference type="Gene3D" id="6.10.250.620">
    <property type="match status" value="1"/>
</dbReference>
<dbReference type="Gene3D" id="3.20.20.540">
    <property type="entry name" value="Radical SAM ThiC family, central domain"/>
    <property type="match status" value="1"/>
</dbReference>
<dbReference type="HAMAP" id="MF_00089">
    <property type="entry name" value="ThiC"/>
    <property type="match status" value="1"/>
</dbReference>
<dbReference type="InterPro" id="IPR037509">
    <property type="entry name" value="ThiC"/>
</dbReference>
<dbReference type="InterPro" id="IPR025747">
    <property type="entry name" value="ThiC-associated_dom"/>
</dbReference>
<dbReference type="InterPro" id="IPR038521">
    <property type="entry name" value="ThiC/Bza_core_dom"/>
</dbReference>
<dbReference type="InterPro" id="IPR002817">
    <property type="entry name" value="ThiC/BzaA/B"/>
</dbReference>
<dbReference type="NCBIfam" id="NF006763">
    <property type="entry name" value="PRK09284.1"/>
    <property type="match status" value="1"/>
</dbReference>
<dbReference type="NCBIfam" id="NF009895">
    <property type="entry name" value="PRK13352.1"/>
    <property type="match status" value="1"/>
</dbReference>
<dbReference type="NCBIfam" id="TIGR00190">
    <property type="entry name" value="thiC"/>
    <property type="match status" value="1"/>
</dbReference>
<dbReference type="PANTHER" id="PTHR30557:SF1">
    <property type="entry name" value="PHOSPHOMETHYLPYRIMIDINE SYNTHASE, CHLOROPLASTIC"/>
    <property type="match status" value="1"/>
</dbReference>
<dbReference type="PANTHER" id="PTHR30557">
    <property type="entry name" value="THIAMINE BIOSYNTHESIS PROTEIN THIC"/>
    <property type="match status" value="1"/>
</dbReference>
<dbReference type="Pfam" id="PF13667">
    <property type="entry name" value="ThiC-associated"/>
    <property type="match status" value="1"/>
</dbReference>
<dbReference type="Pfam" id="PF01964">
    <property type="entry name" value="ThiC_Rad_SAM"/>
    <property type="match status" value="1"/>
</dbReference>
<dbReference type="SFLD" id="SFLDF00407">
    <property type="entry name" value="phosphomethylpyrimidine_syntha"/>
    <property type="match status" value="1"/>
</dbReference>
<dbReference type="SFLD" id="SFLDG01114">
    <property type="entry name" value="phosphomethylpyrimidine_syntha"/>
    <property type="match status" value="1"/>
</dbReference>
<dbReference type="SFLD" id="SFLDS00113">
    <property type="entry name" value="Radical_SAM_Phosphomethylpyrim"/>
    <property type="match status" value="1"/>
</dbReference>
<proteinExistence type="inferred from homology"/>
<keyword id="KW-0004">4Fe-4S</keyword>
<keyword id="KW-0408">Iron</keyword>
<keyword id="KW-0411">Iron-sulfur</keyword>
<keyword id="KW-0456">Lyase</keyword>
<keyword id="KW-0479">Metal-binding</keyword>
<keyword id="KW-0949">S-adenosyl-L-methionine</keyword>
<keyword id="KW-0784">Thiamine biosynthesis</keyword>
<keyword id="KW-0862">Zinc</keyword>
<name>THIC_XANOM</name>
<reference key="1">
    <citation type="journal article" date="2005" name="Jpn. Agric. Res. Q.">
        <title>Genome sequence of Xanthomonas oryzae pv. oryzae suggests contribution of large numbers of effector genes and insertion sequences to its race diversity.</title>
        <authorList>
            <person name="Ochiai H."/>
            <person name="Inoue Y."/>
            <person name="Takeya M."/>
            <person name="Sasaki A."/>
            <person name="Kaku H."/>
        </authorList>
    </citation>
    <scope>NUCLEOTIDE SEQUENCE [LARGE SCALE GENOMIC DNA]</scope>
    <source>
        <strain>MAFF 311018</strain>
    </source>
</reference>
<accession>Q2P755</accession>
<evidence type="ECO:0000255" key="1">
    <source>
        <dbReference type="HAMAP-Rule" id="MF_00089"/>
    </source>
</evidence>
<comment type="function">
    <text evidence="1">Catalyzes the synthesis of the hydroxymethylpyrimidine phosphate (HMP-P) moiety of thiamine from aminoimidazole ribotide (AIR) in a radical S-adenosyl-L-methionine (SAM)-dependent reaction.</text>
</comment>
<comment type="catalytic activity">
    <reaction evidence="1">
        <text>5-amino-1-(5-phospho-beta-D-ribosyl)imidazole + S-adenosyl-L-methionine = 4-amino-2-methyl-5-(phosphooxymethyl)pyrimidine + CO + 5'-deoxyadenosine + formate + L-methionine + 3 H(+)</text>
        <dbReference type="Rhea" id="RHEA:24840"/>
        <dbReference type="ChEBI" id="CHEBI:15378"/>
        <dbReference type="ChEBI" id="CHEBI:15740"/>
        <dbReference type="ChEBI" id="CHEBI:17245"/>
        <dbReference type="ChEBI" id="CHEBI:17319"/>
        <dbReference type="ChEBI" id="CHEBI:57844"/>
        <dbReference type="ChEBI" id="CHEBI:58354"/>
        <dbReference type="ChEBI" id="CHEBI:59789"/>
        <dbReference type="ChEBI" id="CHEBI:137981"/>
        <dbReference type="EC" id="4.1.99.17"/>
    </reaction>
</comment>
<comment type="cofactor">
    <cofactor evidence="1">
        <name>[4Fe-4S] cluster</name>
        <dbReference type="ChEBI" id="CHEBI:49883"/>
    </cofactor>
    <text evidence="1">Binds 1 [4Fe-4S] cluster per subunit. The cluster is coordinated with 3 cysteines and an exchangeable S-adenosyl-L-methionine.</text>
</comment>
<comment type="pathway">
    <text evidence="1">Cofactor biosynthesis; thiamine diphosphate biosynthesis.</text>
</comment>
<comment type="subunit">
    <text evidence="1">Homodimer.</text>
</comment>
<comment type="similarity">
    <text evidence="1">Belongs to the ThiC family.</text>
</comment>
<gene>
    <name evidence="1" type="primary">thiC</name>
    <name type="ordered locus">XOO0867</name>
</gene>